<organismHost>
    <name type="scientific">Cynomys gunnisoni</name>
    <name type="common">Gunnison's prairie dog</name>
    <name type="synonym">Spermophilus gunnisoni</name>
    <dbReference type="NCBI Taxonomy" id="45479"/>
</organismHost>
<organismHost>
    <name type="scientific">Cynomys leucurus</name>
    <name type="common">White-tailed prairie dog</name>
    <dbReference type="NCBI Taxonomy" id="99825"/>
</organismHost>
<organismHost>
    <name type="scientific">Cynomys ludovicianus</name>
    <name type="common">Black-tailed prairie dog</name>
    <dbReference type="NCBI Taxonomy" id="45480"/>
</organismHost>
<organismHost>
    <name type="scientific">Cynomys mexicanus</name>
    <name type="common">Mexican prairie dog</name>
    <dbReference type="NCBI Taxonomy" id="99826"/>
</organismHost>
<organismHost>
    <name type="scientific">Cynomys parvidens</name>
    <name type="common">Utah prairie dog</name>
    <dbReference type="NCBI Taxonomy" id="99827"/>
</organismHost>
<organismHost>
    <name type="scientific">Gliridae</name>
    <name type="common">dormice</name>
    <dbReference type="NCBI Taxonomy" id="30650"/>
</organismHost>
<organismHost>
    <name type="scientific">Heliosciurus ruwenzorii</name>
    <name type="common">Ruwenzori sun squirrel</name>
    <dbReference type="NCBI Taxonomy" id="226685"/>
</organismHost>
<organismHost>
    <name type="scientific">Homo sapiens</name>
    <name type="common">Human</name>
    <dbReference type="NCBI Taxonomy" id="9606"/>
</organismHost>
<organismHost>
    <name type="scientific">Mus musculus</name>
    <name type="common">Mouse</name>
    <dbReference type="NCBI Taxonomy" id="10090"/>
</organismHost>
<protein>
    <recommendedName>
        <fullName>Protein OPG209</fullName>
    </recommendedName>
</protein>
<organism>
    <name type="scientific">Monkeypox virus</name>
    <dbReference type="NCBI Taxonomy" id="10244"/>
    <lineage>
        <taxon>Viruses</taxon>
        <taxon>Varidnaviria</taxon>
        <taxon>Bamfordvirae</taxon>
        <taxon>Nucleocytoviricota</taxon>
        <taxon>Pokkesviricetes</taxon>
        <taxon>Chitovirales</taxon>
        <taxon>Poxviridae</taxon>
        <taxon>Chordopoxvirinae</taxon>
        <taxon>Orthopoxvirus</taxon>
    </lineage>
</organism>
<keyword id="KW-1185">Reference proteome</keyword>
<sequence>MTIYGLIAYLIFVTSSIASPLYIPVIPPISEDKSFNSVEVLVSLFPDDQKDYTVTSQFNNYTIGTKDWTINVLSTPDGLDIPLTNITYWSRFTIGRALFKSESEDIFQKKMSILGVSIECKKPSTLLTFLTVRKMTRVFNRFPDMAYYRGDCLEAVYVTMTYKNTKTGETDYTYLSNGGLPAYYRNGVDG</sequence>
<evidence type="ECO:0000305" key="1"/>
<reference key="1">
    <citation type="journal article" date="2022" name="J. Infect. Dis.">
        <title>Exportation of Monkeypox virus from the African continent.</title>
        <authorList>
            <person name="Mauldin M.R."/>
            <person name="McCollum A.M."/>
            <person name="Nakazawa Y.J."/>
            <person name="Mandra A."/>
            <person name="Whitehouse E.R."/>
            <person name="Davidson W."/>
            <person name="Zhao H."/>
            <person name="Gao J."/>
            <person name="Li Y."/>
            <person name="Doty J."/>
            <person name="Yinka-Ogunleye A."/>
            <person name="Akinpelu A."/>
            <person name="Aruna O."/>
            <person name="Naidoo D."/>
            <person name="Lewandowski K."/>
            <person name="Afrough B."/>
            <person name="Graham V."/>
            <person name="Aarons E."/>
            <person name="Hewson R."/>
            <person name="Vipond R."/>
            <person name="Dunning J."/>
            <person name="Chand M."/>
            <person name="Brown C."/>
            <person name="Cohen-Gihon I."/>
            <person name="Erez N."/>
            <person name="Shifman O."/>
            <person name="Israeli O."/>
            <person name="Sharon M."/>
            <person name="Schwartz E."/>
            <person name="Beth-Din A."/>
            <person name="Zvi A."/>
            <person name="Mak T.M."/>
            <person name="Ng Y.K."/>
            <person name="Cui L."/>
            <person name="Lin R.T.P."/>
            <person name="Olson V.A."/>
            <person name="Brooks T."/>
            <person name="Paran N."/>
            <person name="Ihekweazu C."/>
            <person name="Reynolds M.G."/>
        </authorList>
    </citation>
    <scope>NUCLEOTIDE SEQUENCE [LARGE SCALE GENOMIC DNA]</scope>
    <source>
        <strain>MPXV-M5312_HM12_Rivers</strain>
    </source>
</reference>
<feature type="chain" id="PRO_0000457603" description="Protein OPG209">
    <location>
        <begin position="1"/>
        <end position="190"/>
    </location>
</feature>
<comment type="similarity">
    <text evidence="1">Belongs to the orthopoxvirus OPG209 protein family.</text>
</comment>
<accession>A0A7H0DNG5</accession>
<proteinExistence type="inferred from homology"/>
<name>PG209_MONPV</name>
<gene>
    <name type="primary">OPG209</name>
    <name type="ORF">MPXVgp181</name>
</gene>
<dbReference type="EMBL" id="MT903340">
    <property type="protein sequence ID" value="QNP13048.1"/>
    <property type="molecule type" value="Genomic_DNA"/>
</dbReference>
<dbReference type="RefSeq" id="YP_010377175.1">
    <property type="nucleotide sequence ID" value="NC_063383.1"/>
</dbReference>
<dbReference type="SMR" id="A0A7H0DNG5"/>
<dbReference type="GeneID" id="72551588"/>
<dbReference type="Proteomes" id="UP000516359">
    <property type="component" value="Genome"/>
</dbReference>
<dbReference type="Gene3D" id="2.60.240.20">
    <property type="match status" value="1"/>
</dbReference>
<dbReference type="InterPro" id="IPR009172">
    <property type="entry name" value="Orthopox_C13"/>
</dbReference>
<dbReference type="InterPro" id="IPR010806">
    <property type="entry name" value="Poxvirus_TNF-rcpt-II_C"/>
</dbReference>
<dbReference type="Pfam" id="PF07190">
    <property type="entry name" value="CrmD_SECRET"/>
    <property type="match status" value="1"/>
</dbReference>
<dbReference type="PIRSF" id="PIRSF003692">
    <property type="entry name" value="VAC_C14L"/>
    <property type="match status" value="1"/>
</dbReference>